<protein>
    <recommendedName>
        <fullName evidence="1">Large ribosomal subunit protein bL34</fullName>
    </recommendedName>
    <alternativeName>
        <fullName>50S ribosomal protein L34</fullName>
    </alternativeName>
</protein>
<organism>
    <name type="scientific">Streptomyces coelicolor (strain ATCC BAA-471 / A3(2) / M145)</name>
    <dbReference type="NCBI Taxonomy" id="100226"/>
    <lineage>
        <taxon>Bacteria</taxon>
        <taxon>Bacillati</taxon>
        <taxon>Actinomycetota</taxon>
        <taxon>Actinomycetes</taxon>
        <taxon>Kitasatosporales</taxon>
        <taxon>Streptomycetaceae</taxon>
        <taxon>Streptomyces</taxon>
        <taxon>Streptomyces albidoflavus group</taxon>
    </lineage>
</organism>
<feature type="chain" id="PRO_0000187472" description="Large ribosomal subunit protein bL34">
    <location>
        <begin position="1"/>
        <end position="45"/>
    </location>
</feature>
<evidence type="ECO:0000305" key="1"/>
<name>RL34_STRCO</name>
<sequence length="45" mass="5296">MSKRTFQPNNRRRAKTHGFRLRMRTRAGRAILATRRSKGRARLSA</sequence>
<dbReference type="EMBL" id="AF187159">
    <property type="protein sequence ID" value="AAA26733.1"/>
    <property type="molecule type" value="Genomic_DNA"/>
</dbReference>
<dbReference type="EMBL" id="AL939118">
    <property type="protein sequence ID" value="CAB42694.1"/>
    <property type="molecule type" value="Genomic_DNA"/>
</dbReference>
<dbReference type="PIR" id="C41870">
    <property type="entry name" value="C41870"/>
</dbReference>
<dbReference type="RefSeq" id="NP_628066.1">
    <property type="nucleotide sequence ID" value="NC_003888.3"/>
</dbReference>
<dbReference type="RefSeq" id="WP_003975051.1">
    <property type="nucleotide sequence ID" value="NZ_VNID01000003.1"/>
</dbReference>
<dbReference type="SMR" id="P27901"/>
<dbReference type="FunCoup" id="P27901">
    <property type="interactions" value="97"/>
</dbReference>
<dbReference type="STRING" id="100226.gene:17761507"/>
<dbReference type="PaxDb" id="100226-SCO3880"/>
<dbReference type="GeneID" id="97463738"/>
<dbReference type="KEGG" id="sco:SCO3880"/>
<dbReference type="PATRIC" id="fig|100226.15.peg.3953"/>
<dbReference type="eggNOG" id="COG0230">
    <property type="taxonomic scope" value="Bacteria"/>
</dbReference>
<dbReference type="HOGENOM" id="CLU_129938_2_1_11"/>
<dbReference type="InParanoid" id="P27901"/>
<dbReference type="OrthoDB" id="9804832at2"/>
<dbReference type="PhylomeDB" id="P27901"/>
<dbReference type="Proteomes" id="UP000001973">
    <property type="component" value="Chromosome"/>
</dbReference>
<dbReference type="GO" id="GO:1990904">
    <property type="term" value="C:ribonucleoprotein complex"/>
    <property type="evidence" value="ECO:0007669"/>
    <property type="project" value="UniProtKB-KW"/>
</dbReference>
<dbReference type="GO" id="GO:0005840">
    <property type="term" value="C:ribosome"/>
    <property type="evidence" value="ECO:0007669"/>
    <property type="project" value="UniProtKB-KW"/>
</dbReference>
<dbReference type="GO" id="GO:0003735">
    <property type="term" value="F:structural constituent of ribosome"/>
    <property type="evidence" value="ECO:0007669"/>
    <property type="project" value="InterPro"/>
</dbReference>
<dbReference type="GO" id="GO:0006412">
    <property type="term" value="P:translation"/>
    <property type="evidence" value="ECO:0007669"/>
    <property type="project" value="UniProtKB-UniRule"/>
</dbReference>
<dbReference type="FunFam" id="1.10.287.3980:FF:000001">
    <property type="entry name" value="Mitochondrial ribosomal protein L34"/>
    <property type="match status" value="1"/>
</dbReference>
<dbReference type="Gene3D" id="1.10.287.3980">
    <property type="match status" value="1"/>
</dbReference>
<dbReference type="HAMAP" id="MF_00391">
    <property type="entry name" value="Ribosomal_bL34"/>
    <property type="match status" value="1"/>
</dbReference>
<dbReference type="InterPro" id="IPR000271">
    <property type="entry name" value="Ribosomal_bL34"/>
</dbReference>
<dbReference type="InterPro" id="IPR020939">
    <property type="entry name" value="Ribosomal_bL34_CS"/>
</dbReference>
<dbReference type="NCBIfam" id="TIGR01030">
    <property type="entry name" value="rpmH_bact"/>
    <property type="match status" value="1"/>
</dbReference>
<dbReference type="PANTHER" id="PTHR14503:SF4">
    <property type="entry name" value="LARGE RIBOSOMAL SUBUNIT PROTEIN BL34M"/>
    <property type="match status" value="1"/>
</dbReference>
<dbReference type="PANTHER" id="PTHR14503">
    <property type="entry name" value="MITOCHONDRIAL RIBOSOMAL PROTEIN 34 FAMILY MEMBER"/>
    <property type="match status" value="1"/>
</dbReference>
<dbReference type="Pfam" id="PF00468">
    <property type="entry name" value="Ribosomal_L34"/>
    <property type="match status" value="1"/>
</dbReference>
<dbReference type="PROSITE" id="PS00784">
    <property type="entry name" value="RIBOSOMAL_L34"/>
    <property type="match status" value="1"/>
</dbReference>
<keyword id="KW-1185">Reference proteome</keyword>
<keyword id="KW-0687">Ribonucleoprotein</keyword>
<keyword id="KW-0689">Ribosomal protein</keyword>
<reference key="1">
    <citation type="journal article" date="1992" name="J. Bacteriol.">
        <title>Conserved gene arrangement in the origin region of the Streptomyces coelicolor chromosome.</title>
        <authorList>
            <person name="Calcutt M.J."/>
            <person name="Schmidt F.J."/>
        </authorList>
    </citation>
    <scope>NUCLEOTIDE SEQUENCE [GENOMIC DNA]</scope>
    <source>
        <strain>A3(2) / NRRL B-16638</strain>
    </source>
</reference>
<reference key="2">
    <citation type="journal article" date="2002" name="Nature">
        <title>Complete genome sequence of the model actinomycete Streptomyces coelicolor A3(2).</title>
        <authorList>
            <person name="Bentley S.D."/>
            <person name="Chater K.F."/>
            <person name="Cerdeno-Tarraga A.-M."/>
            <person name="Challis G.L."/>
            <person name="Thomson N.R."/>
            <person name="James K.D."/>
            <person name="Harris D.E."/>
            <person name="Quail M.A."/>
            <person name="Kieser H."/>
            <person name="Harper D."/>
            <person name="Bateman A."/>
            <person name="Brown S."/>
            <person name="Chandra G."/>
            <person name="Chen C.W."/>
            <person name="Collins M."/>
            <person name="Cronin A."/>
            <person name="Fraser A."/>
            <person name="Goble A."/>
            <person name="Hidalgo J."/>
            <person name="Hornsby T."/>
            <person name="Howarth S."/>
            <person name="Huang C.-H."/>
            <person name="Kieser T."/>
            <person name="Larke L."/>
            <person name="Murphy L.D."/>
            <person name="Oliver K."/>
            <person name="O'Neil S."/>
            <person name="Rabbinowitsch E."/>
            <person name="Rajandream M.A."/>
            <person name="Rutherford K.M."/>
            <person name="Rutter S."/>
            <person name="Seeger K."/>
            <person name="Saunders D."/>
            <person name="Sharp S."/>
            <person name="Squares R."/>
            <person name="Squares S."/>
            <person name="Taylor K."/>
            <person name="Warren T."/>
            <person name="Wietzorrek A."/>
            <person name="Woodward J.R."/>
            <person name="Barrell B.G."/>
            <person name="Parkhill J."/>
            <person name="Hopwood D.A."/>
        </authorList>
    </citation>
    <scope>NUCLEOTIDE SEQUENCE [LARGE SCALE GENOMIC DNA]</scope>
    <source>
        <strain>ATCC BAA-471 / A3(2) / M145</strain>
    </source>
</reference>
<comment type="similarity">
    <text evidence="1">Belongs to the bacterial ribosomal protein bL34 family.</text>
</comment>
<gene>
    <name type="primary">rpmH</name>
    <name type="ordered locus">SCO3880</name>
    <name type="ORF">STH24.02</name>
</gene>
<accession>P27901</accession>
<proteinExistence type="inferred from homology"/>